<gene>
    <name evidence="2" type="primary">hutH</name>
    <name type="ordered locus">SCO4932</name>
    <name type="ORF">SCK13.24</name>
</gene>
<sequence length="512" mass="52776">MHTVVVGTSGVTASDVLAVARAGARIELSEEAVAALAAARSVVDALAAKPDPVYGVSTGFGALATRHISPELRGRLQRNIVRSHAAGMGPRVEREVVRALMFLRLKTVCSGRTGVRPEVAQTMADVLNAGITPVVHEYGSLGCSGDLAPLSHCALTLMGEGDAEGPDGTVRPAGELLAAHGIAPVELREKEGLALLNGTDGMLGMLVMALADLDTLYKSADITAALTMEALLGTDRVLAPELHAIRPHPGQAASAANMAAVLKGSGLTGHHQDDAPRVQDAYSVRCAPQVAGAGRDTMAHAGLVAERELAAAVDNPVVLPDGRVESNGNFHGAPVAYVLDFLAVAVADLGSIAERRTDRLLDKNRSHGLPPFLADDAGVDSGLMIAQYTQAALVGELKRLAVPASADSIPSSAMQEDHVSMGWSAARKLRTAVDNLARVIAVELYAATRAIQLREGLTPAPASQAVVEAVRAAGVEGPGPDRHLAPDLAAADAFVRAGHLVAAAESVTGPLR</sequence>
<keyword id="KW-0963">Cytoplasm</keyword>
<keyword id="KW-0369">Histidine metabolism</keyword>
<keyword id="KW-0456">Lyase</keyword>
<keyword id="KW-1185">Reference proteome</keyword>
<evidence type="ECO:0000250" key="1"/>
<evidence type="ECO:0000255" key="2">
    <source>
        <dbReference type="HAMAP-Rule" id="MF_00229"/>
    </source>
</evidence>
<reference key="1">
    <citation type="journal article" date="2002" name="Nature">
        <title>Complete genome sequence of the model actinomycete Streptomyces coelicolor A3(2).</title>
        <authorList>
            <person name="Bentley S.D."/>
            <person name="Chater K.F."/>
            <person name="Cerdeno-Tarraga A.-M."/>
            <person name="Challis G.L."/>
            <person name="Thomson N.R."/>
            <person name="James K.D."/>
            <person name="Harris D.E."/>
            <person name="Quail M.A."/>
            <person name="Kieser H."/>
            <person name="Harper D."/>
            <person name="Bateman A."/>
            <person name="Brown S."/>
            <person name="Chandra G."/>
            <person name="Chen C.W."/>
            <person name="Collins M."/>
            <person name="Cronin A."/>
            <person name="Fraser A."/>
            <person name="Goble A."/>
            <person name="Hidalgo J."/>
            <person name="Hornsby T."/>
            <person name="Howarth S."/>
            <person name="Huang C.-H."/>
            <person name="Kieser T."/>
            <person name="Larke L."/>
            <person name="Murphy L.D."/>
            <person name="Oliver K."/>
            <person name="O'Neil S."/>
            <person name="Rabbinowitsch E."/>
            <person name="Rajandream M.A."/>
            <person name="Rutherford K.M."/>
            <person name="Rutter S."/>
            <person name="Seeger K."/>
            <person name="Saunders D."/>
            <person name="Sharp S."/>
            <person name="Squares R."/>
            <person name="Squares S."/>
            <person name="Taylor K."/>
            <person name="Warren T."/>
            <person name="Wietzorrek A."/>
            <person name="Woodward J.R."/>
            <person name="Barrell B.G."/>
            <person name="Parkhill J."/>
            <person name="Hopwood D.A."/>
        </authorList>
    </citation>
    <scope>NUCLEOTIDE SEQUENCE [LARGE SCALE GENOMIC DNA]</scope>
    <source>
        <strain>ATCC BAA-471 / A3(2) / M145</strain>
    </source>
</reference>
<dbReference type="EC" id="4.3.1.3" evidence="2"/>
<dbReference type="EMBL" id="AL939121">
    <property type="protein sequence ID" value="CAD30922.1"/>
    <property type="molecule type" value="Genomic_DNA"/>
</dbReference>
<dbReference type="RefSeq" id="NP_629085.1">
    <property type="nucleotide sequence ID" value="NC_003888.3"/>
</dbReference>
<dbReference type="RefSeq" id="WP_003974041.1">
    <property type="nucleotide sequence ID" value="NZ_VNID01000027.1"/>
</dbReference>
<dbReference type="SMR" id="Q9EWW1"/>
<dbReference type="STRING" id="100226.gene:17762581"/>
<dbReference type="PaxDb" id="100226-SCO4932"/>
<dbReference type="GeneID" id="91384107"/>
<dbReference type="KEGG" id="sco:SCO4932"/>
<dbReference type="PATRIC" id="fig|100226.15.peg.5011"/>
<dbReference type="eggNOG" id="COG2986">
    <property type="taxonomic scope" value="Bacteria"/>
</dbReference>
<dbReference type="HOGENOM" id="CLU_014801_4_1_11"/>
<dbReference type="InParanoid" id="Q9EWW1"/>
<dbReference type="OrthoDB" id="9806955at2"/>
<dbReference type="PhylomeDB" id="Q9EWW1"/>
<dbReference type="UniPathway" id="UPA00379">
    <property type="reaction ID" value="UER00549"/>
</dbReference>
<dbReference type="Proteomes" id="UP000001973">
    <property type="component" value="Chromosome"/>
</dbReference>
<dbReference type="GO" id="GO:0005737">
    <property type="term" value="C:cytoplasm"/>
    <property type="evidence" value="ECO:0007669"/>
    <property type="project" value="UniProtKB-SubCell"/>
</dbReference>
<dbReference type="GO" id="GO:0004397">
    <property type="term" value="F:histidine ammonia-lyase activity"/>
    <property type="evidence" value="ECO:0000318"/>
    <property type="project" value="GO_Central"/>
</dbReference>
<dbReference type="GO" id="GO:0006548">
    <property type="term" value="P:L-histidine catabolic process"/>
    <property type="evidence" value="ECO:0000318"/>
    <property type="project" value="GO_Central"/>
</dbReference>
<dbReference type="GO" id="GO:0019556">
    <property type="term" value="P:L-histidine catabolic process to glutamate and formamide"/>
    <property type="evidence" value="ECO:0007669"/>
    <property type="project" value="UniProtKB-UniPathway"/>
</dbReference>
<dbReference type="GO" id="GO:0019557">
    <property type="term" value="P:L-histidine catabolic process to glutamate and formate"/>
    <property type="evidence" value="ECO:0007669"/>
    <property type="project" value="UniProtKB-UniPathway"/>
</dbReference>
<dbReference type="CDD" id="cd00332">
    <property type="entry name" value="PAL-HAL"/>
    <property type="match status" value="1"/>
</dbReference>
<dbReference type="FunFam" id="1.10.275.10:FF:000005">
    <property type="entry name" value="Histidine ammonia-lyase"/>
    <property type="match status" value="1"/>
</dbReference>
<dbReference type="FunFam" id="1.20.200.10:FF:000012">
    <property type="entry name" value="Tyrosine ammonia-lyase"/>
    <property type="match status" value="1"/>
</dbReference>
<dbReference type="Gene3D" id="1.20.200.10">
    <property type="entry name" value="Fumarase/aspartase (Central domain)"/>
    <property type="match status" value="1"/>
</dbReference>
<dbReference type="Gene3D" id="1.10.275.10">
    <property type="entry name" value="Fumarase/aspartase (N-terminal domain)"/>
    <property type="match status" value="1"/>
</dbReference>
<dbReference type="HAMAP" id="MF_00229">
    <property type="entry name" value="His_ammonia_lyase"/>
    <property type="match status" value="1"/>
</dbReference>
<dbReference type="InterPro" id="IPR001106">
    <property type="entry name" value="Aromatic_Lyase"/>
</dbReference>
<dbReference type="InterPro" id="IPR024083">
    <property type="entry name" value="Fumarase/histidase_N"/>
</dbReference>
<dbReference type="InterPro" id="IPR005921">
    <property type="entry name" value="HutH"/>
</dbReference>
<dbReference type="InterPro" id="IPR008948">
    <property type="entry name" value="L-Aspartase-like"/>
</dbReference>
<dbReference type="InterPro" id="IPR022313">
    <property type="entry name" value="Phe/His_NH3-lyase_AS"/>
</dbReference>
<dbReference type="NCBIfam" id="TIGR01225">
    <property type="entry name" value="hutH"/>
    <property type="match status" value="1"/>
</dbReference>
<dbReference type="NCBIfam" id="NF006871">
    <property type="entry name" value="PRK09367.1"/>
    <property type="match status" value="1"/>
</dbReference>
<dbReference type="PANTHER" id="PTHR10362">
    <property type="entry name" value="HISTIDINE AMMONIA-LYASE"/>
    <property type="match status" value="1"/>
</dbReference>
<dbReference type="Pfam" id="PF00221">
    <property type="entry name" value="Lyase_aromatic"/>
    <property type="match status" value="1"/>
</dbReference>
<dbReference type="SUPFAM" id="SSF48557">
    <property type="entry name" value="L-aspartase-like"/>
    <property type="match status" value="1"/>
</dbReference>
<dbReference type="PROSITE" id="PS00488">
    <property type="entry name" value="PAL_HISTIDASE"/>
    <property type="match status" value="1"/>
</dbReference>
<organism>
    <name type="scientific">Streptomyces coelicolor (strain ATCC BAA-471 / A3(2) / M145)</name>
    <dbReference type="NCBI Taxonomy" id="100226"/>
    <lineage>
        <taxon>Bacteria</taxon>
        <taxon>Bacillati</taxon>
        <taxon>Actinomycetota</taxon>
        <taxon>Actinomycetes</taxon>
        <taxon>Kitasatosporales</taxon>
        <taxon>Streptomycetaceae</taxon>
        <taxon>Streptomyces</taxon>
        <taxon>Streptomyces albidoflavus group</taxon>
    </lineage>
</organism>
<name>HUTH_STRCO</name>
<feature type="chain" id="PRO_0000161037" description="Histidine ammonia-lyase">
    <location>
        <begin position="1"/>
        <end position="512"/>
    </location>
</feature>
<feature type="modified residue" description="2,3-didehydroalanine (Ser)" evidence="2">
    <location>
        <position position="144"/>
    </location>
</feature>
<feature type="cross-link" description="5-imidazolinone (Cys-Gly)" evidence="1">
    <location>
        <begin position="143"/>
        <end position="145"/>
    </location>
</feature>
<comment type="catalytic activity">
    <reaction evidence="2">
        <text>L-histidine = trans-urocanate + NH4(+)</text>
        <dbReference type="Rhea" id="RHEA:21232"/>
        <dbReference type="ChEBI" id="CHEBI:17771"/>
        <dbReference type="ChEBI" id="CHEBI:28938"/>
        <dbReference type="ChEBI" id="CHEBI:57595"/>
        <dbReference type="EC" id="4.3.1.3"/>
    </reaction>
</comment>
<comment type="pathway">
    <text evidence="2">Amino-acid degradation; L-histidine degradation into L-glutamate; N-formimidoyl-L-glutamate from L-histidine: step 1/3.</text>
</comment>
<comment type="subcellular location">
    <subcellularLocation>
        <location evidence="2">Cytoplasm</location>
    </subcellularLocation>
</comment>
<comment type="PTM">
    <text evidence="2">Contains an active site 4-methylidene-imidazol-5-one (MIO), which is formed autocatalytically by cyclization and dehydration of residues Cys-Ser-Gly.</text>
</comment>
<comment type="similarity">
    <text evidence="2">Belongs to the PAL/histidase family.</text>
</comment>
<protein>
    <recommendedName>
        <fullName evidence="2">Histidine ammonia-lyase</fullName>
        <shortName evidence="2">Histidase</shortName>
        <ecNumber evidence="2">4.3.1.3</ecNumber>
    </recommendedName>
</protein>
<proteinExistence type="inferred from homology"/>
<accession>Q9EWW1</accession>